<feature type="chain" id="PRO_0000397161" description="Proteasome subunit alpha">
    <location>
        <begin position="1"/>
        <end position="267"/>
    </location>
</feature>
<feature type="region of interest" description="Disordered" evidence="2">
    <location>
        <begin position="231"/>
        <end position="267"/>
    </location>
</feature>
<feature type="compositionally biased region" description="Basic and acidic residues" evidence="2">
    <location>
        <begin position="234"/>
        <end position="243"/>
    </location>
</feature>
<feature type="compositionally biased region" description="Basic and acidic residues" evidence="2">
    <location>
        <begin position="252"/>
        <end position="267"/>
    </location>
</feature>
<keyword id="KW-0963">Cytoplasm</keyword>
<keyword id="KW-0647">Proteasome</keyword>
<comment type="function">
    <text evidence="1">Component of the proteasome core, a large protease complex with broad specificity involved in protein degradation.</text>
</comment>
<comment type="activity regulation">
    <text evidence="1">The formation of the proteasomal ATPase ARC-20S proteasome complex, likely via the docking of the C-termini of ARC into the intersubunit pockets in the alpha-rings, may trigger opening of the gate for substrate entry. Interconversion between the open-gate and close-gate conformations leads to a dynamic regulation of the 20S proteasome proteolysis activity.</text>
</comment>
<comment type="pathway">
    <text evidence="1">Protein degradation; proteasomal Pup-dependent pathway.</text>
</comment>
<comment type="subunit">
    <text evidence="1">The 20S proteasome core is composed of 14 alpha and 14 beta subunits that assemble into four stacked heptameric rings, resulting in a barrel-shaped structure. The two inner rings, each composed of seven catalytic beta subunits, are sandwiched by two outer rings, each composed of seven alpha subunits. The catalytic chamber with the active sites is on the inside of the barrel. Has a gated structure, the ends of the cylinder being occluded by the N-termini of the alpha-subunits. Is capped by the proteasome-associated ATPase, ARC.</text>
</comment>
<comment type="subcellular location">
    <subcellularLocation>
        <location evidence="1">Cytoplasm</location>
    </subcellularLocation>
</comment>
<comment type="similarity">
    <text evidence="1">Belongs to the peptidase T1A family.</text>
</comment>
<gene>
    <name evidence="1" type="primary">prcA</name>
    <name type="ordered locus">MUL_2330</name>
</gene>
<accession>A0PQT2</accession>
<protein>
    <recommendedName>
        <fullName evidence="1">Proteasome subunit alpha</fullName>
    </recommendedName>
    <alternativeName>
        <fullName evidence="1">20S proteasome alpha subunit</fullName>
    </alternativeName>
    <alternativeName>
        <fullName evidence="1">Proteasome core protein PrcA</fullName>
    </alternativeName>
</protein>
<dbReference type="EMBL" id="CP000325">
    <property type="protein sequence ID" value="ABL04701.1"/>
    <property type="molecule type" value="Genomic_DNA"/>
</dbReference>
<dbReference type="RefSeq" id="WP_011740317.1">
    <property type="nucleotide sequence ID" value="NC_008611.1"/>
</dbReference>
<dbReference type="SMR" id="A0PQT2"/>
<dbReference type="MEROPS" id="T01.980"/>
<dbReference type="GeneID" id="93437178"/>
<dbReference type="KEGG" id="mul:MUL_2330"/>
<dbReference type="eggNOG" id="COG0638">
    <property type="taxonomic scope" value="Bacteria"/>
</dbReference>
<dbReference type="HOGENOM" id="CLU_071031_0_0_11"/>
<dbReference type="UniPathway" id="UPA00997"/>
<dbReference type="Proteomes" id="UP000000765">
    <property type="component" value="Chromosome"/>
</dbReference>
<dbReference type="GO" id="GO:0005737">
    <property type="term" value="C:cytoplasm"/>
    <property type="evidence" value="ECO:0007669"/>
    <property type="project" value="UniProtKB-SubCell"/>
</dbReference>
<dbReference type="GO" id="GO:0019773">
    <property type="term" value="C:proteasome core complex, alpha-subunit complex"/>
    <property type="evidence" value="ECO:0007669"/>
    <property type="project" value="UniProtKB-UniRule"/>
</dbReference>
<dbReference type="GO" id="GO:0004298">
    <property type="term" value="F:threonine-type endopeptidase activity"/>
    <property type="evidence" value="ECO:0007669"/>
    <property type="project" value="InterPro"/>
</dbReference>
<dbReference type="GO" id="GO:0019941">
    <property type="term" value="P:modification-dependent protein catabolic process"/>
    <property type="evidence" value="ECO:0007669"/>
    <property type="project" value="UniProtKB-UniRule"/>
</dbReference>
<dbReference type="GO" id="GO:0010498">
    <property type="term" value="P:proteasomal protein catabolic process"/>
    <property type="evidence" value="ECO:0007669"/>
    <property type="project" value="UniProtKB-UniRule"/>
</dbReference>
<dbReference type="CDD" id="cd01906">
    <property type="entry name" value="proteasome_protease_HslV"/>
    <property type="match status" value="1"/>
</dbReference>
<dbReference type="FunFam" id="3.60.20.10:FF:000023">
    <property type="entry name" value="Proteasome subunit alpha"/>
    <property type="match status" value="1"/>
</dbReference>
<dbReference type="Gene3D" id="3.60.20.10">
    <property type="entry name" value="Glutamine Phosphoribosylpyrophosphate, subunit 1, domain 1"/>
    <property type="match status" value="1"/>
</dbReference>
<dbReference type="HAMAP" id="MF_00289_B">
    <property type="entry name" value="Proteasome_A_B"/>
    <property type="match status" value="1"/>
</dbReference>
<dbReference type="InterPro" id="IPR029055">
    <property type="entry name" value="Ntn_hydrolases_N"/>
</dbReference>
<dbReference type="InterPro" id="IPR050115">
    <property type="entry name" value="Proteasome_alpha"/>
</dbReference>
<dbReference type="InterPro" id="IPR023332">
    <property type="entry name" value="Proteasome_alpha-type"/>
</dbReference>
<dbReference type="InterPro" id="IPR022296">
    <property type="entry name" value="Proteasome_asu_bac"/>
</dbReference>
<dbReference type="InterPro" id="IPR001353">
    <property type="entry name" value="Proteasome_sua/b"/>
</dbReference>
<dbReference type="NCBIfam" id="TIGR03691">
    <property type="entry name" value="20S_bact_alpha"/>
    <property type="match status" value="1"/>
</dbReference>
<dbReference type="PANTHER" id="PTHR11599">
    <property type="entry name" value="PROTEASOME SUBUNIT ALPHA/BETA"/>
    <property type="match status" value="1"/>
</dbReference>
<dbReference type="Pfam" id="PF00227">
    <property type="entry name" value="Proteasome"/>
    <property type="match status" value="1"/>
</dbReference>
<dbReference type="SUPFAM" id="SSF56235">
    <property type="entry name" value="N-terminal nucleophile aminohydrolases (Ntn hydrolases)"/>
    <property type="match status" value="1"/>
</dbReference>
<dbReference type="PROSITE" id="PS51475">
    <property type="entry name" value="PROTEASOME_ALPHA_2"/>
    <property type="match status" value="1"/>
</dbReference>
<sequence>MSFPYFISPEQAMRERSELARKGIARGKSVVALAFAGGVLFVAENPSRSLQKISELYDRVGFAAAGKFNEFDNLRRGGIQFADTRGYAYDRRDVTGRQLANVYAQTLGTIFTEQAKPYEVELCVAEVAHYGETKAPELYRITYDGSIADEPHFVVMGGTTEPITTALKNTYTENADLPDALDIAVEALRAGSAENSSNDQPVLGVASLEAAILDANKPRRAFRRLTRSTLETLLQERDSKESAESEEPIESEEGKKTGKKSDADSSD</sequence>
<proteinExistence type="inferred from homology"/>
<name>PSA_MYCUA</name>
<organism>
    <name type="scientific">Mycobacterium ulcerans (strain Agy99)</name>
    <dbReference type="NCBI Taxonomy" id="362242"/>
    <lineage>
        <taxon>Bacteria</taxon>
        <taxon>Bacillati</taxon>
        <taxon>Actinomycetota</taxon>
        <taxon>Actinomycetes</taxon>
        <taxon>Mycobacteriales</taxon>
        <taxon>Mycobacteriaceae</taxon>
        <taxon>Mycobacterium</taxon>
        <taxon>Mycobacterium ulcerans group</taxon>
    </lineage>
</organism>
<evidence type="ECO:0000255" key="1">
    <source>
        <dbReference type="HAMAP-Rule" id="MF_00289"/>
    </source>
</evidence>
<evidence type="ECO:0000256" key="2">
    <source>
        <dbReference type="SAM" id="MobiDB-lite"/>
    </source>
</evidence>
<reference key="1">
    <citation type="journal article" date="2007" name="Genome Res.">
        <title>Reductive evolution and niche adaptation inferred from the genome of Mycobacterium ulcerans, the causative agent of Buruli ulcer.</title>
        <authorList>
            <person name="Stinear T.P."/>
            <person name="Seemann T."/>
            <person name="Pidot S."/>
            <person name="Frigui W."/>
            <person name="Reysset G."/>
            <person name="Garnier T."/>
            <person name="Meurice G."/>
            <person name="Simon D."/>
            <person name="Bouchier C."/>
            <person name="Ma L."/>
            <person name="Tichit M."/>
            <person name="Porter J.L."/>
            <person name="Ryan J."/>
            <person name="Johnson P.D.R."/>
            <person name="Davies J.K."/>
            <person name="Jenkin G.A."/>
            <person name="Small P.L.C."/>
            <person name="Jones L.M."/>
            <person name="Tekaia F."/>
            <person name="Laval F."/>
            <person name="Daffe M."/>
            <person name="Parkhill J."/>
            <person name="Cole S.T."/>
        </authorList>
    </citation>
    <scope>NUCLEOTIDE SEQUENCE [LARGE SCALE GENOMIC DNA]</scope>
    <source>
        <strain>Agy99</strain>
    </source>
</reference>